<reference key="1">
    <citation type="journal article" date="2007" name="J. Bacteriol.">
        <title>The genome sequence of avian pathogenic Escherichia coli strain O1:K1:H7 shares strong similarities with human extraintestinal pathogenic E. coli genomes.</title>
        <authorList>
            <person name="Johnson T.J."/>
            <person name="Kariyawasam S."/>
            <person name="Wannemuehler Y."/>
            <person name="Mangiamele P."/>
            <person name="Johnson S.J."/>
            <person name="Doetkott C."/>
            <person name="Skyberg J.A."/>
            <person name="Lynne A.M."/>
            <person name="Johnson J.R."/>
            <person name="Nolan L.K."/>
        </authorList>
    </citation>
    <scope>NUCLEOTIDE SEQUENCE [LARGE SCALE GENOMIC DNA]</scope>
</reference>
<dbReference type="EC" id="5.4.99.12" evidence="1"/>
<dbReference type="EMBL" id="CP000468">
    <property type="protein sequence ID" value="ABJ01707.1"/>
    <property type="molecule type" value="Genomic_DNA"/>
</dbReference>
<dbReference type="RefSeq" id="WP_001283598.1">
    <property type="nucleotide sequence ID" value="NZ_CADILS010000025.1"/>
</dbReference>
<dbReference type="SMR" id="A1ADG7"/>
<dbReference type="KEGG" id="ecv:APECO1_4246"/>
<dbReference type="HOGENOM" id="CLU_014673_0_2_6"/>
<dbReference type="Proteomes" id="UP000008216">
    <property type="component" value="Chromosome"/>
</dbReference>
<dbReference type="GO" id="GO:0003723">
    <property type="term" value="F:RNA binding"/>
    <property type="evidence" value="ECO:0007669"/>
    <property type="project" value="InterPro"/>
</dbReference>
<dbReference type="GO" id="GO:0160147">
    <property type="term" value="F:tRNA pseudouridine(38-40) synthase activity"/>
    <property type="evidence" value="ECO:0007669"/>
    <property type="project" value="UniProtKB-EC"/>
</dbReference>
<dbReference type="GO" id="GO:0031119">
    <property type="term" value="P:tRNA pseudouridine synthesis"/>
    <property type="evidence" value="ECO:0007669"/>
    <property type="project" value="UniProtKB-UniRule"/>
</dbReference>
<dbReference type="CDD" id="cd02570">
    <property type="entry name" value="PseudoU_synth_EcTruA"/>
    <property type="match status" value="1"/>
</dbReference>
<dbReference type="FunFam" id="3.30.70.580:FF:000001">
    <property type="entry name" value="tRNA pseudouridine synthase A"/>
    <property type="match status" value="1"/>
</dbReference>
<dbReference type="FunFam" id="3.30.70.660:FF:000001">
    <property type="entry name" value="tRNA pseudouridine synthase A"/>
    <property type="match status" value="1"/>
</dbReference>
<dbReference type="Gene3D" id="3.30.70.660">
    <property type="entry name" value="Pseudouridine synthase I, catalytic domain, C-terminal subdomain"/>
    <property type="match status" value="1"/>
</dbReference>
<dbReference type="Gene3D" id="3.30.70.580">
    <property type="entry name" value="Pseudouridine synthase I, catalytic domain, N-terminal subdomain"/>
    <property type="match status" value="1"/>
</dbReference>
<dbReference type="HAMAP" id="MF_00171">
    <property type="entry name" value="TruA"/>
    <property type="match status" value="1"/>
</dbReference>
<dbReference type="InterPro" id="IPR020103">
    <property type="entry name" value="PsdUridine_synth_cat_dom_sf"/>
</dbReference>
<dbReference type="InterPro" id="IPR001406">
    <property type="entry name" value="PsdUridine_synth_TruA"/>
</dbReference>
<dbReference type="InterPro" id="IPR020097">
    <property type="entry name" value="PsdUridine_synth_TruA_a/b_dom"/>
</dbReference>
<dbReference type="InterPro" id="IPR020095">
    <property type="entry name" value="PsdUridine_synth_TruA_C"/>
</dbReference>
<dbReference type="InterPro" id="IPR020094">
    <property type="entry name" value="TruA/RsuA/RluB/E/F_N"/>
</dbReference>
<dbReference type="NCBIfam" id="TIGR00071">
    <property type="entry name" value="hisT_truA"/>
    <property type="match status" value="1"/>
</dbReference>
<dbReference type="PANTHER" id="PTHR11142">
    <property type="entry name" value="PSEUDOURIDYLATE SYNTHASE"/>
    <property type="match status" value="1"/>
</dbReference>
<dbReference type="PANTHER" id="PTHR11142:SF0">
    <property type="entry name" value="TRNA PSEUDOURIDINE SYNTHASE-LIKE 1"/>
    <property type="match status" value="1"/>
</dbReference>
<dbReference type="Pfam" id="PF01416">
    <property type="entry name" value="PseudoU_synth_1"/>
    <property type="match status" value="2"/>
</dbReference>
<dbReference type="PIRSF" id="PIRSF001430">
    <property type="entry name" value="tRNA_psdUrid_synth"/>
    <property type="match status" value="1"/>
</dbReference>
<dbReference type="SUPFAM" id="SSF55120">
    <property type="entry name" value="Pseudouridine synthase"/>
    <property type="match status" value="1"/>
</dbReference>
<protein>
    <recommendedName>
        <fullName evidence="1">tRNA pseudouridine synthase A</fullName>
        <ecNumber evidence="1">5.4.99.12</ecNumber>
    </recommendedName>
    <alternativeName>
        <fullName evidence="1">tRNA pseudouridine(38-40) synthase</fullName>
    </alternativeName>
    <alternativeName>
        <fullName evidence="1">tRNA pseudouridylate synthase I</fullName>
    </alternativeName>
    <alternativeName>
        <fullName evidence="1">tRNA-uridine isomerase I</fullName>
    </alternativeName>
</protein>
<evidence type="ECO:0000255" key="1">
    <source>
        <dbReference type="HAMAP-Rule" id="MF_00171"/>
    </source>
</evidence>
<keyword id="KW-0413">Isomerase</keyword>
<keyword id="KW-1185">Reference proteome</keyword>
<keyword id="KW-0819">tRNA processing</keyword>
<sequence>MSDQQQPPVYKIALGIEYDGSRYYGWQRQNEVRSVQEKLEKALSQVANEPITVFCAGRTDAGVHGTGQVVHFETTAQRKDAAWTLGVNANLPGDIAVRWVKAVPDDFHARFSATARRYRYIIYNHRLRPAVLSKGVTHFYEPLDAERMHRAAQCLLGENDFTSFRAVQCQSRTPWRNVMHINVTRHGPYVVVDIKANAFVHHMVRNIVGSLMEVGAHNQPESWIAELLAAKDRTLAAATAKAEGLYLVAVDYPDRYDLPKPPMGPLFLAD</sequence>
<accession>A1ADG7</accession>
<feature type="chain" id="PRO_1000017075" description="tRNA pseudouridine synthase A">
    <location>
        <begin position="1"/>
        <end position="270"/>
    </location>
</feature>
<feature type="region of interest" description="RNA binding" evidence="1">
    <location>
        <begin position="107"/>
        <end position="111"/>
    </location>
</feature>
<feature type="region of interest" description="Interaction with tRNA" evidence="1">
    <location>
        <begin position="168"/>
        <end position="172"/>
    </location>
</feature>
<feature type="active site" description="Nucleophile" evidence="1">
    <location>
        <position position="60"/>
    </location>
</feature>
<feature type="binding site" evidence="1">
    <location>
        <position position="118"/>
    </location>
    <ligand>
        <name>substrate</name>
    </ligand>
</feature>
<feature type="site" description="Interaction with tRNA; Important for base-flipping" evidence="1">
    <location>
        <position position="58"/>
    </location>
</feature>
<feature type="site" description="Interaction with tRNA" evidence="1">
    <location>
        <position position="78"/>
    </location>
</feature>
<feature type="site" description="Interaction with tRNA" evidence="1">
    <location>
        <position position="110"/>
    </location>
</feature>
<feature type="site" description="Interaction with tRNA" evidence="1">
    <location>
        <position position="126"/>
    </location>
</feature>
<feature type="site" description="Interaction with tRNA" evidence="1">
    <location>
        <position position="139"/>
    </location>
</feature>
<proteinExistence type="inferred from homology"/>
<name>TRUA_ECOK1</name>
<comment type="function">
    <text evidence="1">Formation of pseudouridine at positions 38, 39 and 40 in the anticodon stem and loop of transfer RNAs.</text>
</comment>
<comment type="catalytic activity">
    <reaction evidence="1">
        <text>uridine(38/39/40) in tRNA = pseudouridine(38/39/40) in tRNA</text>
        <dbReference type="Rhea" id="RHEA:22376"/>
        <dbReference type="Rhea" id="RHEA-COMP:10085"/>
        <dbReference type="Rhea" id="RHEA-COMP:10087"/>
        <dbReference type="ChEBI" id="CHEBI:65314"/>
        <dbReference type="ChEBI" id="CHEBI:65315"/>
        <dbReference type="EC" id="5.4.99.12"/>
    </reaction>
</comment>
<comment type="subunit">
    <text evidence="1">Homodimer.</text>
</comment>
<comment type="similarity">
    <text evidence="1">Belongs to the tRNA pseudouridine synthase TruA family.</text>
</comment>
<gene>
    <name evidence="1" type="primary">truA</name>
    <name type="ordered locus">Ecok1_22130</name>
    <name type="ORF">APECO1_4246</name>
</gene>
<organism>
    <name type="scientific">Escherichia coli O1:K1 / APEC</name>
    <dbReference type="NCBI Taxonomy" id="405955"/>
    <lineage>
        <taxon>Bacteria</taxon>
        <taxon>Pseudomonadati</taxon>
        <taxon>Pseudomonadota</taxon>
        <taxon>Gammaproteobacteria</taxon>
        <taxon>Enterobacterales</taxon>
        <taxon>Enterobacteriaceae</taxon>
        <taxon>Escherichia</taxon>
    </lineage>
</organism>